<organism>
    <name type="scientific">Pseudarthrobacter chlorophenolicus (strain ATCC 700700 / DSM 12829 / CIP 107037 / JCM 12360 / KCTC 9906 / NCIMB 13794 / A6)</name>
    <name type="common">Arthrobacter chlorophenolicus</name>
    <dbReference type="NCBI Taxonomy" id="452863"/>
    <lineage>
        <taxon>Bacteria</taxon>
        <taxon>Bacillati</taxon>
        <taxon>Actinomycetota</taxon>
        <taxon>Actinomycetes</taxon>
        <taxon>Micrococcales</taxon>
        <taxon>Micrococcaceae</taxon>
        <taxon>Pseudarthrobacter</taxon>
    </lineage>
</organism>
<protein>
    <recommendedName>
        <fullName evidence="1">Peptidyl-tRNA hydrolase</fullName>
        <shortName evidence="1">Pth</shortName>
        <ecNumber evidence="1">3.1.1.29</ecNumber>
    </recommendedName>
</protein>
<keyword id="KW-0963">Cytoplasm</keyword>
<keyword id="KW-0378">Hydrolase</keyword>
<keyword id="KW-0694">RNA-binding</keyword>
<keyword id="KW-0820">tRNA-binding</keyword>
<proteinExistence type="inferred from homology"/>
<comment type="function">
    <text evidence="1">Hydrolyzes ribosome-free peptidyl-tRNAs (with 1 or more amino acids incorporated), which drop off the ribosome during protein synthesis, or as a result of ribosome stalling.</text>
</comment>
<comment type="function">
    <text evidence="1">Catalyzes the release of premature peptidyl moieties from peptidyl-tRNA molecules trapped in stalled 50S ribosomal subunits, and thus maintains levels of free tRNAs and 50S ribosomes.</text>
</comment>
<comment type="catalytic activity">
    <reaction evidence="1">
        <text>an N-acyl-L-alpha-aminoacyl-tRNA + H2O = an N-acyl-L-amino acid + a tRNA + H(+)</text>
        <dbReference type="Rhea" id="RHEA:54448"/>
        <dbReference type="Rhea" id="RHEA-COMP:10123"/>
        <dbReference type="Rhea" id="RHEA-COMP:13883"/>
        <dbReference type="ChEBI" id="CHEBI:15377"/>
        <dbReference type="ChEBI" id="CHEBI:15378"/>
        <dbReference type="ChEBI" id="CHEBI:59874"/>
        <dbReference type="ChEBI" id="CHEBI:78442"/>
        <dbReference type="ChEBI" id="CHEBI:138191"/>
        <dbReference type="EC" id="3.1.1.29"/>
    </reaction>
</comment>
<comment type="subunit">
    <text evidence="1">Monomer.</text>
</comment>
<comment type="subcellular location">
    <subcellularLocation>
        <location evidence="1">Cytoplasm</location>
    </subcellularLocation>
</comment>
<comment type="similarity">
    <text evidence="1">Belongs to the PTH family.</text>
</comment>
<sequence>MTDTWLIVGLGNPGAQYQGNRHNVGQMVLDELAGRVGAGFKSHKARAQVVEGRLGIGGPRVVLAKPMTYMNVSGGPVSALANFYGISPDHVVAVHDEIDIPFNTVKLKIGGGEGGHNGLRDISKALATKDYLRVRVGVGRPPGRMDTADYVLRDFGTAELKELPFLLDEAADAVELLLQEGLTAAQQKFHPAKTAG</sequence>
<name>PTH_PSECP</name>
<reference key="1">
    <citation type="submission" date="2009-01" db="EMBL/GenBank/DDBJ databases">
        <title>Complete sequence of chromosome of Arthrobacter chlorophenolicus A6.</title>
        <authorList>
            <consortium name="US DOE Joint Genome Institute"/>
            <person name="Lucas S."/>
            <person name="Copeland A."/>
            <person name="Lapidus A."/>
            <person name="Glavina del Rio T."/>
            <person name="Tice H."/>
            <person name="Bruce D."/>
            <person name="Goodwin L."/>
            <person name="Pitluck S."/>
            <person name="Goltsman E."/>
            <person name="Clum A."/>
            <person name="Larimer F."/>
            <person name="Land M."/>
            <person name="Hauser L."/>
            <person name="Kyrpides N."/>
            <person name="Mikhailova N."/>
            <person name="Jansson J."/>
            <person name="Richardson P."/>
        </authorList>
    </citation>
    <scope>NUCLEOTIDE SEQUENCE [LARGE SCALE GENOMIC DNA]</scope>
    <source>
        <strain>ATCC 700700 / DSM 12829 / CIP 107037 / JCM 12360 / KCTC 9906 / NCIMB 13794 / A6</strain>
    </source>
</reference>
<feature type="chain" id="PRO_1000192957" description="Peptidyl-tRNA hydrolase">
    <location>
        <begin position="1"/>
        <end position="196"/>
    </location>
</feature>
<feature type="active site" description="Proton acceptor" evidence="1">
    <location>
        <position position="22"/>
    </location>
</feature>
<feature type="binding site" evidence="1">
    <location>
        <position position="17"/>
    </location>
    <ligand>
        <name>tRNA</name>
        <dbReference type="ChEBI" id="CHEBI:17843"/>
    </ligand>
</feature>
<feature type="binding site" evidence="1">
    <location>
        <position position="69"/>
    </location>
    <ligand>
        <name>tRNA</name>
        <dbReference type="ChEBI" id="CHEBI:17843"/>
    </ligand>
</feature>
<feature type="binding site" evidence="1">
    <location>
        <position position="71"/>
    </location>
    <ligand>
        <name>tRNA</name>
        <dbReference type="ChEBI" id="CHEBI:17843"/>
    </ligand>
</feature>
<feature type="binding site" evidence="1">
    <location>
        <position position="117"/>
    </location>
    <ligand>
        <name>tRNA</name>
        <dbReference type="ChEBI" id="CHEBI:17843"/>
    </ligand>
</feature>
<feature type="site" description="Discriminates between blocked and unblocked aminoacyl-tRNA" evidence="1">
    <location>
        <position position="12"/>
    </location>
</feature>
<feature type="site" description="Stabilizes the basic form of H active site to accept a proton" evidence="1">
    <location>
        <position position="96"/>
    </location>
</feature>
<accession>B8HFE2</accession>
<gene>
    <name evidence="1" type="primary">pth</name>
    <name type="ordered locus">Achl_1290</name>
</gene>
<evidence type="ECO:0000255" key="1">
    <source>
        <dbReference type="HAMAP-Rule" id="MF_00083"/>
    </source>
</evidence>
<dbReference type="EC" id="3.1.1.29" evidence="1"/>
<dbReference type="EMBL" id="CP001341">
    <property type="protein sequence ID" value="ACL39281.1"/>
    <property type="molecule type" value="Genomic_DNA"/>
</dbReference>
<dbReference type="RefSeq" id="WP_015936504.1">
    <property type="nucleotide sequence ID" value="NC_011886.1"/>
</dbReference>
<dbReference type="SMR" id="B8HFE2"/>
<dbReference type="STRING" id="452863.Achl_1290"/>
<dbReference type="KEGG" id="ach:Achl_1290"/>
<dbReference type="eggNOG" id="COG0193">
    <property type="taxonomic scope" value="Bacteria"/>
</dbReference>
<dbReference type="HOGENOM" id="CLU_062456_2_2_11"/>
<dbReference type="OrthoDB" id="9800507at2"/>
<dbReference type="Proteomes" id="UP000002505">
    <property type="component" value="Chromosome"/>
</dbReference>
<dbReference type="GO" id="GO:0005737">
    <property type="term" value="C:cytoplasm"/>
    <property type="evidence" value="ECO:0007669"/>
    <property type="project" value="UniProtKB-SubCell"/>
</dbReference>
<dbReference type="GO" id="GO:0004045">
    <property type="term" value="F:peptidyl-tRNA hydrolase activity"/>
    <property type="evidence" value="ECO:0007669"/>
    <property type="project" value="UniProtKB-UniRule"/>
</dbReference>
<dbReference type="GO" id="GO:0000049">
    <property type="term" value="F:tRNA binding"/>
    <property type="evidence" value="ECO:0007669"/>
    <property type="project" value="UniProtKB-UniRule"/>
</dbReference>
<dbReference type="GO" id="GO:0006515">
    <property type="term" value="P:protein quality control for misfolded or incompletely synthesized proteins"/>
    <property type="evidence" value="ECO:0007669"/>
    <property type="project" value="UniProtKB-UniRule"/>
</dbReference>
<dbReference type="GO" id="GO:0072344">
    <property type="term" value="P:rescue of stalled ribosome"/>
    <property type="evidence" value="ECO:0007669"/>
    <property type="project" value="UniProtKB-UniRule"/>
</dbReference>
<dbReference type="CDD" id="cd00462">
    <property type="entry name" value="PTH"/>
    <property type="match status" value="1"/>
</dbReference>
<dbReference type="FunFam" id="3.40.50.1470:FF:000001">
    <property type="entry name" value="Peptidyl-tRNA hydrolase"/>
    <property type="match status" value="1"/>
</dbReference>
<dbReference type="Gene3D" id="3.40.50.1470">
    <property type="entry name" value="Peptidyl-tRNA hydrolase"/>
    <property type="match status" value="1"/>
</dbReference>
<dbReference type="HAMAP" id="MF_00083">
    <property type="entry name" value="Pept_tRNA_hydro_bact"/>
    <property type="match status" value="1"/>
</dbReference>
<dbReference type="InterPro" id="IPR001328">
    <property type="entry name" value="Pept_tRNA_hydro"/>
</dbReference>
<dbReference type="InterPro" id="IPR018171">
    <property type="entry name" value="Pept_tRNA_hydro_CS"/>
</dbReference>
<dbReference type="InterPro" id="IPR036416">
    <property type="entry name" value="Pept_tRNA_hydro_sf"/>
</dbReference>
<dbReference type="NCBIfam" id="TIGR00447">
    <property type="entry name" value="pth"/>
    <property type="match status" value="1"/>
</dbReference>
<dbReference type="PANTHER" id="PTHR17224">
    <property type="entry name" value="PEPTIDYL-TRNA HYDROLASE"/>
    <property type="match status" value="1"/>
</dbReference>
<dbReference type="PANTHER" id="PTHR17224:SF1">
    <property type="entry name" value="PEPTIDYL-TRNA HYDROLASE"/>
    <property type="match status" value="1"/>
</dbReference>
<dbReference type="Pfam" id="PF01195">
    <property type="entry name" value="Pept_tRNA_hydro"/>
    <property type="match status" value="1"/>
</dbReference>
<dbReference type="SUPFAM" id="SSF53178">
    <property type="entry name" value="Peptidyl-tRNA hydrolase-like"/>
    <property type="match status" value="1"/>
</dbReference>
<dbReference type="PROSITE" id="PS01195">
    <property type="entry name" value="PEPT_TRNA_HYDROL_1"/>
    <property type="match status" value="1"/>
</dbReference>
<dbReference type="PROSITE" id="PS01196">
    <property type="entry name" value="PEPT_TRNA_HYDROL_2"/>
    <property type="match status" value="1"/>
</dbReference>